<comment type="function">
    <text evidence="3">Multifunctional enzyme that catalyzes the NAD(+)-dependent oxidation of L-carnitine to 3-dehydrocarnitine and the cleavage of betainyl-CoA (N,N,N-trimethylglycyl-CoA) into glycine betaine and coenzyme A (PubMed:30670548). Can also hydrolyze L-carnitinyl-CoA, but with much lower efficiency (PubMed:30670548). Is involved in a L-carnitine degradation pathway that allows R.meliloti to grow on L-carnitine as the sole source of carbon and nitrogen (PubMed:30670548).</text>
</comment>
<comment type="catalytic activity">
    <reaction evidence="3">
        <text>carnitine + NAD(+) = 3-dehydrocarnitine + NADH + H(+)</text>
        <dbReference type="Rhea" id="RHEA:19265"/>
        <dbReference type="ChEBI" id="CHEBI:15378"/>
        <dbReference type="ChEBI" id="CHEBI:17126"/>
        <dbReference type="ChEBI" id="CHEBI:57540"/>
        <dbReference type="ChEBI" id="CHEBI:57885"/>
        <dbReference type="ChEBI" id="CHEBI:57945"/>
        <dbReference type="EC" id="1.1.1.108"/>
    </reaction>
    <physiologicalReaction direction="left-to-right" evidence="3">
        <dbReference type="Rhea" id="RHEA:19266"/>
    </physiologicalReaction>
</comment>
<comment type="catalytic activity">
    <reaction evidence="3">
        <text>N,N,N-trimethylglycyl-CoA + H2O = glycine betaine + CoA + H(+)</text>
        <dbReference type="Rhea" id="RHEA:45716"/>
        <dbReference type="ChEBI" id="CHEBI:15377"/>
        <dbReference type="ChEBI" id="CHEBI:15378"/>
        <dbReference type="ChEBI" id="CHEBI:17750"/>
        <dbReference type="ChEBI" id="CHEBI:57287"/>
        <dbReference type="ChEBI" id="CHEBI:85405"/>
        <dbReference type="EC" id="3.1.2.33"/>
    </reaction>
    <physiologicalReaction direction="left-to-right" evidence="3">
        <dbReference type="Rhea" id="RHEA:45717"/>
    </physiologicalReaction>
</comment>
<comment type="biophysicochemical properties">
    <kinetics>
        <KM evidence="3">940 uM for L-carnitine</KM>
        <KM evidence="3">154 uM for NAD(+)</KM>
        <KM evidence="3">12 uM for L-carnitinyl-CoA</KM>
        <KM evidence="3">12 uM for betainyl-CoA</KM>
        <text evidence="3">kcat is 6.2 sec(-1) with L-carnitine as substrate. kcat is 5.1 sec(-1) with NAD(+) as substrate. kcat is 0.9 sec(-1) with L-carnitinyl-CoA as substrate. kcat is 142.3 sec(-1) with betainyl-CoA as substrate.</text>
    </kinetics>
</comment>
<comment type="pathway">
    <text evidence="4">Amine and polyamine metabolism; carnitine metabolism.</text>
</comment>
<comment type="subunit">
    <text evidence="3">Homodimer.</text>
</comment>
<comment type="subcellular location">
    <subcellularLocation>
        <location evidence="1">Cytoplasm</location>
    </subcellularLocation>
</comment>
<comment type="disruption phenotype">
    <text evidence="3">Disruption of the gene in strain Rm2011 abolishes growth on gamma-butyrobetaine (GBB).</text>
</comment>
<comment type="similarity">
    <text evidence="5">In the N-terminal section; belongs to the 3-hydroxyacyl-CoA dehydrogenase family. L-carnitine dehydrogenase subfamily.</text>
</comment>
<comment type="similarity">
    <text evidence="5">In the C-terminal section; belongs to the betainyl-CoA thioesterase family.</text>
</comment>
<proteinExistence type="evidence at protein level"/>
<evidence type="ECO:0000250" key="1">
    <source>
        <dbReference type="UniProtKB" id="D7UNT2"/>
    </source>
</evidence>
<evidence type="ECO:0000255" key="2"/>
<evidence type="ECO:0000269" key="3">
    <source>
    </source>
</evidence>
<evidence type="ECO:0000303" key="4">
    <source>
    </source>
</evidence>
<evidence type="ECO:0000305" key="5"/>
<evidence type="ECO:0000312" key="6">
    <source>
        <dbReference type="EMBL" id="CAC46829.1"/>
    </source>
</evidence>
<keyword id="KW-0963">Cytoplasm</keyword>
<keyword id="KW-0378">Hydrolase</keyword>
<keyword id="KW-0511">Multifunctional enzyme</keyword>
<keyword id="KW-0520">NAD</keyword>
<keyword id="KW-0560">Oxidoreductase</keyword>
<keyword id="KW-1185">Reference proteome</keyword>
<sequence length="496" mass="54306">MTTITKAACIGGGVIGGAWAARFALAGIDVNIFDPHPEAERIIGEVMANAERAYGMLTMAPLPPRGKFTFCRSIQEAVEGVDWIQESVPERLPLKRGVINEIDAAARPDALIGSSTSGLLPSDLQAEMKHPERMFVAHPYNPVYLLPLVELVGGRKTSPETIRRAEEAVAEIGMKGVVIAKEIEAFVGDRLLEALWREALWLIQDDICDTETLDDVMRYSFGMRWAQMGLFETYRIAGGEAGMRHFLAQFGPCLKWPWTKFTDVVDLDDALVEKIGAQSDAQAAGRSIRELERIRDENLVGIMHALKAGDGGKGWGAGKLLADFEKRLWEKGGSPSKSLDASGPLRLVDTKVNAAWVDYNGHMTEHRYLQLFGDTSDALLKVIGVDFAYVEAGHSYYTVETHIRHLGEAKLGQALYTTLQLLSSDEKRIHFFTRIHDAASGDVIATAEQMMLHVDAKAGKSVPAPAEVMAKLKPIAEGHAKLDAPDGAGRHVGQKR</sequence>
<gene>
    <name evidence="4" type="primary">bcoE-bcoF</name>
    <name type="synonym">cdhAB</name>
    <name type="ordered locus">R02250</name>
    <name evidence="6" type="ORF">SMc01638</name>
</gene>
<organism>
    <name type="scientific">Rhizobium meliloti (strain 1021)</name>
    <name type="common">Ensifer meliloti</name>
    <name type="synonym">Sinorhizobium meliloti</name>
    <dbReference type="NCBI Taxonomy" id="266834"/>
    <lineage>
        <taxon>Bacteria</taxon>
        <taxon>Pseudomonadati</taxon>
        <taxon>Pseudomonadota</taxon>
        <taxon>Alphaproteobacteria</taxon>
        <taxon>Hyphomicrobiales</taxon>
        <taxon>Rhizobiaceae</taxon>
        <taxon>Sinorhizobium/Ensifer group</taxon>
        <taxon>Sinorhizobium</taxon>
    </lineage>
</organism>
<dbReference type="EC" id="1.1.1.108" evidence="3"/>
<dbReference type="EC" id="3.1.2.33" evidence="3"/>
<dbReference type="EMBL" id="AL591688">
    <property type="protein sequence ID" value="CAC46829.1"/>
    <property type="molecule type" value="Genomic_DNA"/>
</dbReference>
<dbReference type="RefSeq" id="NP_386356.1">
    <property type="nucleotide sequence ID" value="NC_003047.1"/>
</dbReference>
<dbReference type="RefSeq" id="WP_003537893.1">
    <property type="nucleotide sequence ID" value="NC_003047.1"/>
</dbReference>
<dbReference type="SMR" id="Q92NF5"/>
<dbReference type="EnsemblBacteria" id="CAC46829">
    <property type="protein sequence ID" value="CAC46829"/>
    <property type="gene ID" value="SMc01638"/>
</dbReference>
<dbReference type="KEGG" id="sme:SMc01638"/>
<dbReference type="PATRIC" id="fig|266834.11.peg.3719"/>
<dbReference type="eggNOG" id="COG0824">
    <property type="taxonomic scope" value="Bacteria"/>
</dbReference>
<dbReference type="eggNOG" id="COG1250">
    <property type="taxonomic scope" value="Bacteria"/>
</dbReference>
<dbReference type="HOGENOM" id="CLU_578448_0_0_5"/>
<dbReference type="OrthoDB" id="9803287at2"/>
<dbReference type="UniPathway" id="UPA00117"/>
<dbReference type="Proteomes" id="UP000001976">
    <property type="component" value="Chromosome"/>
</dbReference>
<dbReference type="GO" id="GO:0005737">
    <property type="term" value="C:cytoplasm"/>
    <property type="evidence" value="ECO:0007669"/>
    <property type="project" value="UniProtKB-SubCell"/>
</dbReference>
<dbReference type="GO" id="GO:0047728">
    <property type="term" value="F:carnitine 3-dehydrogenase activity"/>
    <property type="evidence" value="ECO:0007669"/>
    <property type="project" value="UniProtKB-UniRule"/>
</dbReference>
<dbReference type="GO" id="GO:0016787">
    <property type="term" value="F:hydrolase activity"/>
    <property type="evidence" value="ECO:0007669"/>
    <property type="project" value="UniProtKB-KW"/>
</dbReference>
<dbReference type="GO" id="GO:0070403">
    <property type="term" value="F:NAD+ binding"/>
    <property type="evidence" value="ECO:0007669"/>
    <property type="project" value="InterPro"/>
</dbReference>
<dbReference type="GO" id="GO:0009437">
    <property type="term" value="P:carnitine metabolic process"/>
    <property type="evidence" value="ECO:0007669"/>
    <property type="project" value="UniProtKB-UniRule"/>
</dbReference>
<dbReference type="GO" id="GO:0009056">
    <property type="term" value="P:catabolic process"/>
    <property type="evidence" value="ECO:0007669"/>
    <property type="project" value="UniProtKB-ARBA"/>
</dbReference>
<dbReference type="GO" id="GO:0006631">
    <property type="term" value="P:fatty acid metabolic process"/>
    <property type="evidence" value="ECO:0007669"/>
    <property type="project" value="InterPro"/>
</dbReference>
<dbReference type="CDD" id="cd00586">
    <property type="entry name" value="4HBT"/>
    <property type="match status" value="1"/>
</dbReference>
<dbReference type="FunFam" id="1.10.1040.10:FF:000027">
    <property type="entry name" value="L-carnitine dehydrogenase"/>
    <property type="match status" value="1"/>
</dbReference>
<dbReference type="Gene3D" id="3.10.129.10">
    <property type="entry name" value="Hotdog Thioesterase"/>
    <property type="match status" value="1"/>
</dbReference>
<dbReference type="Gene3D" id="1.10.1040.10">
    <property type="entry name" value="N-(1-d-carboxylethyl)-l-norvaline Dehydrogenase, domain 2"/>
    <property type="match status" value="1"/>
</dbReference>
<dbReference type="Gene3D" id="3.40.50.720">
    <property type="entry name" value="NAD(P)-binding Rossmann-like Domain"/>
    <property type="match status" value="1"/>
</dbReference>
<dbReference type="HAMAP" id="MF_02129">
    <property type="entry name" value="L_carnitine_dehydrog"/>
    <property type="match status" value="1"/>
</dbReference>
<dbReference type="InterPro" id="IPR006176">
    <property type="entry name" value="3-OHacyl-CoA_DH_NAD-bd"/>
</dbReference>
<dbReference type="InterPro" id="IPR006108">
    <property type="entry name" value="3HC_DH_C"/>
</dbReference>
<dbReference type="InterPro" id="IPR008927">
    <property type="entry name" value="6-PGluconate_DH-like_C_sf"/>
</dbReference>
<dbReference type="InterPro" id="IPR013328">
    <property type="entry name" value="6PGD_dom2"/>
</dbReference>
<dbReference type="InterPro" id="IPR029069">
    <property type="entry name" value="HotDog_dom_sf"/>
</dbReference>
<dbReference type="InterPro" id="IPR026578">
    <property type="entry name" value="L-carnitine_dehydrogenase"/>
</dbReference>
<dbReference type="InterPro" id="IPR036291">
    <property type="entry name" value="NAD(P)-bd_dom_sf"/>
</dbReference>
<dbReference type="NCBIfam" id="NF005716">
    <property type="entry name" value="PRK07531.1"/>
    <property type="match status" value="1"/>
</dbReference>
<dbReference type="PANTHER" id="PTHR48075">
    <property type="entry name" value="3-HYDROXYACYL-COA DEHYDROGENASE FAMILY PROTEIN"/>
    <property type="match status" value="1"/>
</dbReference>
<dbReference type="PANTHER" id="PTHR48075:SF5">
    <property type="entry name" value="3-HYDROXYBUTYRYL-COA DEHYDROGENASE"/>
    <property type="match status" value="1"/>
</dbReference>
<dbReference type="Pfam" id="PF00725">
    <property type="entry name" value="3HCDH"/>
    <property type="match status" value="1"/>
</dbReference>
<dbReference type="Pfam" id="PF02737">
    <property type="entry name" value="3HCDH_N"/>
    <property type="match status" value="1"/>
</dbReference>
<dbReference type="Pfam" id="PF13279">
    <property type="entry name" value="4HBT_2"/>
    <property type="match status" value="1"/>
</dbReference>
<dbReference type="SUPFAM" id="SSF48179">
    <property type="entry name" value="6-phosphogluconate dehydrogenase C-terminal domain-like"/>
    <property type="match status" value="1"/>
</dbReference>
<dbReference type="SUPFAM" id="SSF51735">
    <property type="entry name" value="NAD(P)-binding Rossmann-fold domains"/>
    <property type="match status" value="1"/>
</dbReference>
<dbReference type="SUPFAM" id="SSF54637">
    <property type="entry name" value="Thioesterase/thiol ester dehydrase-isomerase"/>
    <property type="match status" value="1"/>
</dbReference>
<accession>Q92NF5</accession>
<reference key="1">
    <citation type="journal article" date="2001" name="Proc. Natl. Acad. Sci. U.S.A.">
        <title>Analysis of the chromosome sequence of the legume symbiont Sinorhizobium meliloti strain 1021.</title>
        <authorList>
            <person name="Capela D."/>
            <person name="Barloy-Hubler F."/>
            <person name="Gouzy J."/>
            <person name="Bothe G."/>
            <person name="Ampe F."/>
            <person name="Batut J."/>
            <person name="Boistard P."/>
            <person name="Becker A."/>
            <person name="Boutry M."/>
            <person name="Cadieu E."/>
            <person name="Dreano S."/>
            <person name="Gloux S."/>
            <person name="Godrie T."/>
            <person name="Goffeau A."/>
            <person name="Kahn D."/>
            <person name="Kiss E."/>
            <person name="Lelaure V."/>
            <person name="Masuy D."/>
            <person name="Pohl T."/>
            <person name="Portetelle D."/>
            <person name="Puehler A."/>
            <person name="Purnelle B."/>
            <person name="Ramsperger U."/>
            <person name="Renard C."/>
            <person name="Thebault P."/>
            <person name="Vandenbol M."/>
            <person name="Weidner S."/>
            <person name="Galibert F."/>
        </authorList>
    </citation>
    <scope>NUCLEOTIDE SEQUENCE [LARGE SCALE GENOMIC DNA]</scope>
    <source>
        <strain>1021</strain>
    </source>
</reference>
<reference key="2">
    <citation type="journal article" date="2001" name="Science">
        <title>The composite genome of the legume symbiont Sinorhizobium meliloti.</title>
        <authorList>
            <person name="Galibert F."/>
            <person name="Finan T.M."/>
            <person name="Long S.R."/>
            <person name="Puehler A."/>
            <person name="Abola P."/>
            <person name="Ampe F."/>
            <person name="Barloy-Hubler F."/>
            <person name="Barnett M.J."/>
            <person name="Becker A."/>
            <person name="Boistard P."/>
            <person name="Bothe G."/>
            <person name="Boutry M."/>
            <person name="Bowser L."/>
            <person name="Buhrmester J."/>
            <person name="Cadieu E."/>
            <person name="Capela D."/>
            <person name="Chain P."/>
            <person name="Cowie A."/>
            <person name="Davis R.W."/>
            <person name="Dreano S."/>
            <person name="Federspiel N.A."/>
            <person name="Fisher R.F."/>
            <person name="Gloux S."/>
            <person name="Godrie T."/>
            <person name="Goffeau A."/>
            <person name="Golding B."/>
            <person name="Gouzy J."/>
            <person name="Gurjal M."/>
            <person name="Hernandez-Lucas I."/>
            <person name="Hong A."/>
            <person name="Huizar L."/>
            <person name="Hyman R.W."/>
            <person name="Jones T."/>
            <person name="Kahn D."/>
            <person name="Kahn M.L."/>
            <person name="Kalman S."/>
            <person name="Keating D.H."/>
            <person name="Kiss E."/>
            <person name="Komp C."/>
            <person name="Lelaure V."/>
            <person name="Masuy D."/>
            <person name="Palm C."/>
            <person name="Peck M.C."/>
            <person name="Pohl T.M."/>
            <person name="Portetelle D."/>
            <person name="Purnelle B."/>
            <person name="Ramsperger U."/>
            <person name="Surzycki R."/>
            <person name="Thebault P."/>
            <person name="Vandenbol M."/>
            <person name="Vorhoelter F.J."/>
            <person name="Weidner S."/>
            <person name="Wells D.H."/>
            <person name="Wong K."/>
            <person name="Yeh K.-C."/>
            <person name="Batut J."/>
        </authorList>
    </citation>
    <scope>NUCLEOTIDE SEQUENCE [LARGE SCALE GENOMIC DNA]</scope>
    <source>
        <strain>1021</strain>
    </source>
</reference>
<reference key="3">
    <citation type="journal article" date="2019" name="J. Bacteriol.">
        <title>Characterization of L-carnitine metabolism in Sinorhizobium meliloti.</title>
        <authorList>
            <person name="Bazire P."/>
            <person name="Perchat N."/>
            <person name="Darii E."/>
            <person name="Lechaplais C."/>
            <person name="Salanoubat M."/>
            <person name="Perret A."/>
        </authorList>
    </citation>
    <scope>FUNCTION</scope>
    <scope>CATALYTIC ACTIVITY</scope>
    <scope>BIOPHYSICOCHEMICAL PROPERTIES</scope>
    <scope>SUBUNIT</scope>
    <scope>DISRUPTION PHENOTYPE</scope>
    <source>
        <strain>1021</strain>
        <strain>3D0a2</strain>
        <strain>Rm2011</strain>
    </source>
</reference>
<feature type="chain" id="PRO_0000417905" description="L-carnitine dehydrogenase/betainyl-CoA thioesterase">
    <location>
        <begin position="1"/>
        <end position="496"/>
    </location>
</feature>
<feature type="region of interest" description="L-carnitine dehydrogenase" evidence="5">
    <location>
        <begin position="1"/>
        <end position="335"/>
    </location>
</feature>
<feature type="region of interest" description="Betainyl-CoA thioesterase" evidence="5">
    <location>
        <begin position="336"/>
        <end position="496"/>
    </location>
</feature>
<feature type="binding site" evidence="2">
    <location>
        <begin position="11"/>
        <end position="16"/>
    </location>
    <ligand>
        <name>NAD(+)</name>
        <dbReference type="ChEBI" id="CHEBI:57540"/>
    </ligand>
</feature>
<protein>
    <recommendedName>
        <fullName evidence="5">L-carnitine dehydrogenase/betainyl-CoA thioesterase</fullName>
    </recommendedName>
    <alternativeName>
        <fullName evidence="4">CDH thioesterase</fullName>
    </alternativeName>
    <domain>
        <recommendedName>
            <fullName evidence="4">L-carnitine dehydrogenase</fullName>
            <shortName evidence="4">CDH</shortName>
            <shortName evidence="5">L-CDH</shortName>
            <ecNumber evidence="3">1.1.1.108</ecNumber>
        </recommendedName>
    </domain>
    <domain>
        <recommendedName>
            <fullName evidence="5">Betainyl-CoA thioesterase</fullName>
            <ecNumber evidence="3">3.1.2.33</ecNumber>
        </recommendedName>
        <alternativeName>
            <fullName evidence="4">Betainyl-CoA thiolase</fullName>
        </alternativeName>
    </domain>
</protein>
<name>LCDHT_RHIME</name>